<dbReference type="EC" id="4.3.2.1" evidence="1"/>
<dbReference type="EMBL" id="AM421808">
    <property type="protein sequence ID" value="CAM09874.1"/>
    <property type="molecule type" value="Genomic_DNA"/>
</dbReference>
<dbReference type="RefSeq" id="WP_002221316.1">
    <property type="nucleotide sequence ID" value="NC_008767.1"/>
</dbReference>
<dbReference type="SMR" id="A1KSP4"/>
<dbReference type="KEGG" id="nmc:NMC0580"/>
<dbReference type="HOGENOM" id="CLU_027272_2_3_4"/>
<dbReference type="UniPathway" id="UPA00068">
    <property type="reaction ID" value="UER00114"/>
</dbReference>
<dbReference type="Proteomes" id="UP000002286">
    <property type="component" value="Chromosome"/>
</dbReference>
<dbReference type="GO" id="GO:0005829">
    <property type="term" value="C:cytosol"/>
    <property type="evidence" value="ECO:0007669"/>
    <property type="project" value="TreeGrafter"/>
</dbReference>
<dbReference type="GO" id="GO:0004056">
    <property type="term" value="F:argininosuccinate lyase activity"/>
    <property type="evidence" value="ECO:0007669"/>
    <property type="project" value="UniProtKB-UniRule"/>
</dbReference>
<dbReference type="GO" id="GO:0042450">
    <property type="term" value="P:arginine biosynthetic process via ornithine"/>
    <property type="evidence" value="ECO:0007669"/>
    <property type="project" value="InterPro"/>
</dbReference>
<dbReference type="GO" id="GO:0006526">
    <property type="term" value="P:L-arginine biosynthetic process"/>
    <property type="evidence" value="ECO:0007669"/>
    <property type="project" value="UniProtKB-UniRule"/>
</dbReference>
<dbReference type="CDD" id="cd01359">
    <property type="entry name" value="Argininosuccinate_lyase"/>
    <property type="match status" value="1"/>
</dbReference>
<dbReference type="FunFam" id="1.10.275.10:FF:000002">
    <property type="entry name" value="Argininosuccinate lyase"/>
    <property type="match status" value="1"/>
</dbReference>
<dbReference type="FunFam" id="1.10.40.30:FF:000001">
    <property type="entry name" value="Argininosuccinate lyase"/>
    <property type="match status" value="1"/>
</dbReference>
<dbReference type="FunFam" id="1.20.200.10:FF:000015">
    <property type="entry name" value="argininosuccinate lyase isoform X2"/>
    <property type="match status" value="1"/>
</dbReference>
<dbReference type="Gene3D" id="1.10.40.30">
    <property type="entry name" value="Fumarase/aspartase (C-terminal domain)"/>
    <property type="match status" value="1"/>
</dbReference>
<dbReference type="Gene3D" id="1.20.200.10">
    <property type="entry name" value="Fumarase/aspartase (Central domain)"/>
    <property type="match status" value="1"/>
</dbReference>
<dbReference type="Gene3D" id="1.10.275.10">
    <property type="entry name" value="Fumarase/aspartase (N-terminal domain)"/>
    <property type="match status" value="1"/>
</dbReference>
<dbReference type="HAMAP" id="MF_00006">
    <property type="entry name" value="Arg_succ_lyase"/>
    <property type="match status" value="1"/>
</dbReference>
<dbReference type="InterPro" id="IPR029419">
    <property type="entry name" value="Arg_succ_lyase_C"/>
</dbReference>
<dbReference type="InterPro" id="IPR009049">
    <property type="entry name" value="Argininosuccinate_lyase"/>
</dbReference>
<dbReference type="InterPro" id="IPR024083">
    <property type="entry name" value="Fumarase/histidase_N"/>
</dbReference>
<dbReference type="InterPro" id="IPR020557">
    <property type="entry name" value="Fumarate_lyase_CS"/>
</dbReference>
<dbReference type="InterPro" id="IPR000362">
    <property type="entry name" value="Fumarate_lyase_fam"/>
</dbReference>
<dbReference type="InterPro" id="IPR022761">
    <property type="entry name" value="Fumarate_lyase_N"/>
</dbReference>
<dbReference type="InterPro" id="IPR008948">
    <property type="entry name" value="L-Aspartase-like"/>
</dbReference>
<dbReference type="NCBIfam" id="TIGR00838">
    <property type="entry name" value="argH"/>
    <property type="match status" value="1"/>
</dbReference>
<dbReference type="PANTHER" id="PTHR43814">
    <property type="entry name" value="ARGININOSUCCINATE LYASE"/>
    <property type="match status" value="1"/>
</dbReference>
<dbReference type="PANTHER" id="PTHR43814:SF1">
    <property type="entry name" value="ARGININOSUCCINATE LYASE"/>
    <property type="match status" value="1"/>
</dbReference>
<dbReference type="Pfam" id="PF14698">
    <property type="entry name" value="ASL_C2"/>
    <property type="match status" value="1"/>
</dbReference>
<dbReference type="Pfam" id="PF00206">
    <property type="entry name" value="Lyase_1"/>
    <property type="match status" value="1"/>
</dbReference>
<dbReference type="PRINTS" id="PR00145">
    <property type="entry name" value="ARGSUCLYASE"/>
</dbReference>
<dbReference type="PRINTS" id="PR00149">
    <property type="entry name" value="FUMRATELYASE"/>
</dbReference>
<dbReference type="SUPFAM" id="SSF48557">
    <property type="entry name" value="L-aspartase-like"/>
    <property type="match status" value="1"/>
</dbReference>
<dbReference type="PROSITE" id="PS00163">
    <property type="entry name" value="FUMARATE_LYASES"/>
    <property type="match status" value="1"/>
</dbReference>
<organism>
    <name type="scientific">Neisseria meningitidis serogroup C / serotype 2a (strain ATCC 700532 / DSM 15464 / FAM18)</name>
    <dbReference type="NCBI Taxonomy" id="272831"/>
    <lineage>
        <taxon>Bacteria</taxon>
        <taxon>Pseudomonadati</taxon>
        <taxon>Pseudomonadota</taxon>
        <taxon>Betaproteobacteria</taxon>
        <taxon>Neisseriales</taxon>
        <taxon>Neisseriaceae</taxon>
        <taxon>Neisseria</taxon>
    </lineage>
</organism>
<keyword id="KW-0028">Amino-acid biosynthesis</keyword>
<keyword id="KW-0055">Arginine biosynthesis</keyword>
<keyword id="KW-0963">Cytoplasm</keyword>
<keyword id="KW-0456">Lyase</keyword>
<reference key="1">
    <citation type="journal article" date="2007" name="PLoS Genet.">
        <title>Meningococcal genetic variation mechanisms viewed through comparative analysis of serogroup C strain FAM18.</title>
        <authorList>
            <person name="Bentley S.D."/>
            <person name="Vernikos G.S."/>
            <person name="Snyder L.A.S."/>
            <person name="Churcher C."/>
            <person name="Arrowsmith C."/>
            <person name="Chillingworth T."/>
            <person name="Cronin A."/>
            <person name="Davis P.H."/>
            <person name="Holroyd N.E."/>
            <person name="Jagels K."/>
            <person name="Maddison M."/>
            <person name="Moule S."/>
            <person name="Rabbinowitsch E."/>
            <person name="Sharp S."/>
            <person name="Unwin L."/>
            <person name="Whitehead S."/>
            <person name="Quail M.A."/>
            <person name="Achtman M."/>
            <person name="Barrell B.G."/>
            <person name="Saunders N.J."/>
            <person name="Parkhill J."/>
        </authorList>
    </citation>
    <scope>NUCLEOTIDE SEQUENCE [LARGE SCALE GENOMIC DNA]</scope>
    <source>
        <strain>ATCC 700532 / DSM 15464 / FAM18</strain>
    </source>
</reference>
<comment type="catalytic activity">
    <reaction evidence="1">
        <text>2-(N(omega)-L-arginino)succinate = fumarate + L-arginine</text>
        <dbReference type="Rhea" id="RHEA:24020"/>
        <dbReference type="ChEBI" id="CHEBI:29806"/>
        <dbReference type="ChEBI" id="CHEBI:32682"/>
        <dbReference type="ChEBI" id="CHEBI:57472"/>
        <dbReference type="EC" id="4.3.2.1"/>
    </reaction>
</comment>
<comment type="pathway">
    <text evidence="1">Amino-acid biosynthesis; L-arginine biosynthesis; L-arginine from L-ornithine and carbamoyl phosphate: step 3/3.</text>
</comment>
<comment type="subcellular location">
    <subcellularLocation>
        <location evidence="1">Cytoplasm</location>
    </subcellularLocation>
</comment>
<comment type="similarity">
    <text evidence="1">Belongs to the lyase 1 family. Argininosuccinate lyase subfamily.</text>
</comment>
<sequence>MHDKTWSGRFNEPVSELVKQYTASIGFDRRLAEWDIQGSLAHAQMLKETGVLDEGDLADIRRGMAEILEEIRSGKIEWSSDLEDVHMNIERRLTDKIGDAGKRLHTGRSRNDQVATDIRLWLRDQITVIRSLIQSLQTALLDLAEQNAETVMPGFTHLQVAQPVSFGHHMLAYVEMLGRDNERMADCRCRVNRMPLGAAALAGTTYPIQREITAELLGFEQICQNSLDAVSDRDFAIEFTAAASLVMVHLSRLSEELILWMSPRFGFIDIADRFCTGSSIMPQKKNPDVPELVRGKSGRVIGHLIGLITLMKSQPLAYNKDNQEDKEPLFDTADTLIDTLRIYADMMRGVTVKPDNMRAAVMQGFATATDLADYLVKKGMPFRDAHEVVAQAVRHADEAGVDLSELPLEVLQGFSDLIADDVYGVLTPEGSLNARNHLGGTAPEQVRFQVKRWREMLA</sequence>
<feature type="chain" id="PRO_1000000513" description="Argininosuccinate lyase">
    <location>
        <begin position="1"/>
        <end position="458"/>
    </location>
</feature>
<protein>
    <recommendedName>
        <fullName evidence="1">Argininosuccinate lyase</fullName>
        <shortName evidence="1">ASAL</shortName>
        <ecNumber evidence="1">4.3.2.1</ecNumber>
    </recommendedName>
    <alternativeName>
        <fullName evidence="1">Arginosuccinase</fullName>
    </alternativeName>
</protein>
<name>ARLY_NEIMF</name>
<evidence type="ECO:0000255" key="1">
    <source>
        <dbReference type="HAMAP-Rule" id="MF_00006"/>
    </source>
</evidence>
<accession>A1KSP4</accession>
<proteinExistence type="inferred from homology"/>
<gene>
    <name evidence="1" type="primary">argH</name>
    <name type="ordered locus">NMC0580</name>
</gene>